<keyword id="KW-0028">Amino-acid biosynthesis</keyword>
<keyword id="KW-0057">Aromatic amino acid biosynthesis</keyword>
<keyword id="KW-0170">Cobalt</keyword>
<keyword id="KW-0963">Cytoplasm</keyword>
<keyword id="KW-0456">Lyase</keyword>
<keyword id="KW-0479">Metal-binding</keyword>
<keyword id="KW-0520">NAD</keyword>
<keyword id="KW-0547">Nucleotide-binding</keyword>
<keyword id="KW-0862">Zinc</keyword>
<name>AROB_CAMJR</name>
<reference key="1">
    <citation type="journal article" date="2005" name="PLoS Biol.">
        <title>Major structural differences and novel potential virulence mechanisms from the genomes of multiple Campylobacter species.</title>
        <authorList>
            <person name="Fouts D.E."/>
            <person name="Mongodin E.F."/>
            <person name="Mandrell R.E."/>
            <person name="Miller W.G."/>
            <person name="Rasko D.A."/>
            <person name="Ravel J."/>
            <person name="Brinkac L.M."/>
            <person name="DeBoy R.T."/>
            <person name="Parker C.T."/>
            <person name="Daugherty S.C."/>
            <person name="Dodson R.J."/>
            <person name="Durkin A.S."/>
            <person name="Madupu R."/>
            <person name="Sullivan S.A."/>
            <person name="Shetty J.U."/>
            <person name="Ayodeji M.A."/>
            <person name="Shvartsbeyn A."/>
            <person name="Schatz M.C."/>
            <person name="Badger J.H."/>
            <person name="Fraser C.M."/>
            <person name="Nelson K.E."/>
        </authorList>
    </citation>
    <scope>NUCLEOTIDE SEQUENCE [LARGE SCALE GENOMIC DNA]</scope>
    <source>
        <strain>RM1221</strain>
    </source>
</reference>
<feature type="chain" id="PRO_0000140721" description="3-dehydroquinate synthase">
    <location>
        <begin position="1"/>
        <end position="351"/>
    </location>
</feature>
<feature type="binding site" evidence="1">
    <location>
        <begin position="60"/>
        <end position="65"/>
    </location>
    <ligand>
        <name>NAD(+)</name>
        <dbReference type="ChEBI" id="CHEBI:57540"/>
    </ligand>
</feature>
<feature type="binding site" evidence="1">
    <location>
        <begin position="94"/>
        <end position="98"/>
    </location>
    <ligand>
        <name>NAD(+)</name>
        <dbReference type="ChEBI" id="CHEBI:57540"/>
    </ligand>
</feature>
<feature type="binding site" evidence="1">
    <location>
        <begin position="118"/>
        <end position="119"/>
    </location>
    <ligand>
        <name>NAD(+)</name>
        <dbReference type="ChEBI" id="CHEBI:57540"/>
    </ligand>
</feature>
<feature type="binding site" evidence="1">
    <location>
        <position position="131"/>
    </location>
    <ligand>
        <name>NAD(+)</name>
        <dbReference type="ChEBI" id="CHEBI:57540"/>
    </ligand>
</feature>
<feature type="binding site" evidence="1">
    <location>
        <position position="140"/>
    </location>
    <ligand>
        <name>NAD(+)</name>
        <dbReference type="ChEBI" id="CHEBI:57540"/>
    </ligand>
</feature>
<feature type="binding site" evidence="1">
    <location>
        <begin position="158"/>
        <end position="161"/>
    </location>
    <ligand>
        <name>NAD(+)</name>
        <dbReference type="ChEBI" id="CHEBI:57540"/>
    </ligand>
</feature>
<feature type="binding site" evidence="1">
    <location>
        <position position="173"/>
    </location>
    <ligand>
        <name>Zn(2+)</name>
        <dbReference type="ChEBI" id="CHEBI:29105"/>
    </ligand>
</feature>
<feature type="binding site" evidence="1">
    <location>
        <position position="239"/>
    </location>
    <ligand>
        <name>Zn(2+)</name>
        <dbReference type="ChEBI" id="CHEBI:29105"/>
    </ligand>
</feature>
<feature type="binding site" evidence="1">
    <location>
        <position position="256"/>
    </location>
    <ligand>
        <name>Zn(2+)</name>
        <dbReference type="ChEBI" id="CHEBI:29105"/>
    </ligand>
</feature>
<sequence>MQVEVKLKENAYKVYIDELEELEFDSKVFILSNPKISGLHLKTLLSKIKAKEIFIATVKDGEEYKNLSTMEEILNQMFNSKLDRKSVLISFGGGVISDMGGFAASIYQRGIDFINIPTTLLACVDAAVGGKTGVNNNFGKNLIGTFYQPKAVYCESFFLKTLSSRELAAGMAEFIKMAAMFDYSILDFIEKIDEKSFLNATCENEIFTQIIAKSIELKSRVVEQDEKESRLRMLLNYGHTFAHVIENFTDYKLYLHGEAVAIGMVMANQLALNLGLLDKMQSQRIKDILLKFGLPISYKINNVDEFYEAFFMDKKSSNKKINFVLASPLGKGLIKGDISKEDIIATLREFQ</sequence>
<comment type="function">
    <text evidence="1">Catalyzes the conversion of 3-deoxy-D-arabino-heptulosonate 7-phosphate (DAHP) to dehydroquinate (DHQ).</text>
</comment>
<comment type="catalytic activity">
    <reaction evidence="1">
        <text>7-phospho-2-dehydro-3-deoxy-D-arabino-heptonate = 3-dehydroquinate + phosphate</text>
        <dbReference type="Rhea" id="RHEA:21968"/>
        <dbReference type="ChEBI" id="CHEBI:32364"/>
        <dbReference type="ChEBI" id="CHEBI:43474"/>
        <dbReference type="ChEBI" id="CHEBI:58394"/>
        <dbReference type="EC" id="4.2.3.4"/>
    </reaction>
</comment>
<comment type="cofactor">
    <cofactor evidence="1">
        <name>NAD(+)</name>
        <dbReference type="ChEBI" id="CHEBI:57540"/>
    </cofactor>
</comment>
<comment type="cofactor">
    <cofactor evidence="1">
        <name>Co(2+)</name>
        <dbReference type="ChEBI" id="CHEBI:48828"/>
    </cofactor>
    <cofactor evidence="1">
        <name>Zn(2+)</name>
        <dbReference type="ChEBI" id="CHEBI:29105"/>
    </cofactor>
    <text evidence="1">Binds 1 divalent metal cation per subunit. Can use either Co(2+) or Zn(2+).</text>
</comment>
<comment type="pathway">
    <text evidence="1">Metabolic intermediate biosynthesis; chorismate biosynthesis; chorismate from D-erythrose 4-phosphate and phosphoenolpyruvate: step 2/7.</text>
</comment>
<comment type="subcellular location">
    <subcellularLocation>
        <location evidence="1">Cytoplasm</location>
    </subcellularLocation>
</comment>
<comment type="similarity">
    <text evidence="1">Belongs to the sugar phosphate cyclases superfamily. Dehydroquinate synthase family.</text>
</comment>
<accession>Q5HUF4</accession>
<protein>
    <recommendedName>
        <fullName evidence="1">3-dehydroquinate synthase</fullName>
        <shortName evidence="1">DHQS</shortName>
        <ecNumber evidence="1">4.2.3.4</ecNumber>
    </recommendedName>
</protein>
<dbReference type="EC" id="4.2.3.4" evidence="1"/>
<dbReference type="EMBL" id="CP000025">
    <property type="protein sequence ID" value="AAW35416.1"/>
    <property type="molecule type" value="Genomic_DNA"/>
</dbReference>
<dbReference type="RefSeq" id="WP_002852978.1">
    <property type="nucleotide sequence ID" value="NC_003912.7"/>
</dbReference>
<dbReference type="SMR" id="Q5HUF4"/>
<dbReference type="KEGG" id="cjr:CJE1088"/>
<dbReference type="HOGENOM" id="CLU_001201_0_1_7"/>
<dbReference type="UniPathway" id="UPA00053">
    <property type="reaction ID" value="UER00085"/>
</dbReference>
<dbReference type="GO" id="GO:0005737">
    <property type="term" value="C:cytoplasm"/>
    <property type="evidence" value="ECO:0007669"/>
    <property type="project" value="UniProtKB-SubCell"/>
</dbReference>
<dbReference type="GO" id="GO:0003856">
    <property type="term" value="F:3-dehydroquinate synthase activity"/>
    <property type="evidence" value="ECO:0007669"/>
    <property type="project" value="UniProtKB-UniRule"/>
</dbReference>
<dbReference type="GO" id="GO:0046872">
    <property type="term" value="F:metal ion binding"/>
    <property type="evidence" value="ECO:0007669"/>
    <property type="project" value="UniProtKB-KW"/>
</dbReference>
<dbReference type="GO" id="GO:0000166">
    <property type="term" value="F:nucleotide binding"/>
    <property type="evidence" value="ECO:0007669"/>
    <property type="project" value="UniProtKB-KW"/>
</dbReference>
<dbReference type="GO" id="GO:0008652">
    <property type="term" value="P:amino acid biosynthetic process"/>
    <property type="evidence" value="ECO:0007669"/>
    <property type="project" value="UniProtKB-KW"/>
</dbReference>
<dbReference type="GO" id="GO:0009073">
    <property type="term" value="P:aromatic amino acid family biosynthetic process"/>
    <property type="evidence" value="ECO:0007669"/>
    <property type="project" value="UniProtKB-KW"/>
</dbReference>
<dbReference type="GO" id="GO:0009423">
    <property type="term" value="P:chorismate biosynthetic process"/>
    <property type="evidence" value="ECO:0007669"/>
    <property type="project" value="UniProtKB-UniRule"/>
</dbReference>
<dbReference type="CDD" id="cd08195">
    <property type="entry name" value="DHQS"/>
    <property type="match status" value="1"/>
</dbReference>
<dbReference type="FunFam" id="3.40.50.1970:FF:000007">
    <property type="entry name" value="Pentafunctional AROM polypeptide"/>
    <property type="match status" value="1"/>
</dbReference>
<dbReference type="Gene3D" id="3.40.50.1970">
    <property type="match status" value="1"/>
</dbReference>
<dbReference type="Gene3D" id="1.20.1090.10">
    <property type="entry name" value="Dehydroquinate synthase-like - alpha domain"/>
    <property type="match status" value="1"/>
</dbReference>
<dbReference type="HAMAP" id="MF_00110">
    <property type="entry name" value="DHQ_synthase"/>
    <property type="match status" value="1"/>
</dbReference>
<dbReference type="InterPro" id="IPR050071">
    <property type="entry name" value="Dehydroquinate_synthase"/>
</dbReference>
<dbReference type="InterPro" id="IPR016037">
    <property type="entry name" value="DHQ_synth_AroB"/>
</dbReference>
<dbReference type="InterPro" id="IPR030963">
    <property type="entry name" value="DHQ_synth_fam"/>
</dbReference>
<dbReference type="InterPro" id="IPR030960">
    <property type="entry name" value="DHQS/DOIS_N"/>
</dbReference>
<dbReference type="InterPro" id="IPR056179">
    <property type="entry name" value="DHQS_C"/>
</dbReference>
<dbReference type="NCBIfam" id="TIGR01357">
    <property type="entry name" value="aroB"/>
    <property type="match status" value="1"/>
</dbReference>
<dbReference type="PANTHER" id="PTHR43622">
    <property type="entry name" value="3-DEHYDROQUINATE SYNTHASE"/>
    <property type="match status" value="1"/>
</dbReference>
<dbReference type="PANTHER" id="PTHR43622:SF7">
    <property type="entry name" value="3-DEHYDROQUINATE SYNTHASE, CHLOROPLASTIC"/>
    <property type="match status" value="1"/>
</dbReference>
<dbReference type="Pfam" id="PF01761">
    <property type="entry name" value="DHQ_synthase"/>
    <property type="match status" value="1"/>
</dbReference>
<dbReference type="Pfam" id="PF24621">
    <property type="entry name" value="DHQS_C"/>
    <property type="match status" value="1"/>
</dbReference>
<dbReference type="PIRSF" id="PIRSF001455">
    <property type="entry name" value="DHQ_synth"/>
    <property type="match status" value="1"/>
</dbReference>
<dbReference type="SUPFAM" id="SSF56796">
    <property type="entry name" value="Dehydroquinate synthase-like"/>
    <property type="match status" value="1"/>
</dbReference>
<evidence type="ECO:0000255" key="1">
    <source>
        <dbReference type="HAMAP-Rule" id="MF_00110"/>
    </source>
</evidence>
<proteinExistence type="inferred from homology"/>
<organism>
    <name type="scientific">Campylobacter jejuni (strain RM1221)</name>
    <dbReference type="NCBI Taxonomy" id="195099"/>
    <lineage>
        <taxon>Bacteria</taxon>
        <taxon>Pseudomonadati</taxon>
        <taxon>Campylobacterota</taxon>
        <taxon>Epsilonproteobacteria</taxon>
        <taxon>Campylobacterales</taxon>
        <taxon>Campylobacteraceae</taxon>
        <taxon>Campylobacter</taxon>
    </lineage>
</organism>
<gene>
    <name evidence="1" type="primary">aroB</name>
    <name type="ordered locus">CJE1088</name>
</gene>